<name>BRO1_CRYNB</name>
<gene>
    <name type="primary">BRO1</name>
    <name type="ordered locus">CNBG2670</name>
</gene>
<proteinExistence type="inferred from homology"/>
<comment type="function">
    <text evidence="1">Involved in concentration and sorting of cargo proteins of the multivesicular body (MVB) for incorporation into intralumenal vesicles.</text>
</comment>
<comment type="subcellular location">
    <subcellularLocation>
        <location evidence="1">Cytoplasm</location>
    </subcellularLocation>
    <subcellularLocation>
        <location evidence="1">Endosome</location>
    </subcellularLocation>
</comment>
<comment type="similarity">
    <text evidence="5">Belongs to the BRO1 family.</text>
</comment>
<feature type="chain" id="PRO_0000410024" description="Vacuolar protein-sorting protein BRO1">
    <location>
        <begin position="1"/>
        <end position="957"/>
    </location>
</feature>
<feature type="domain" description="BRO1" evidence="3">
    <location>
        <begin position="6"/>
        <end position="406"/>
    </location>
</feature>
<feature type="region of interest" description="Disordered" evidence="4">
    <location>
        <begin position="751"/>
        <end position="779"/>
    </location>
</feature>
<feature type="region of interest" description="Disordered" evidence="4">
    <location>
        <begin position="795"/>
        <end position="957"/>
    </location>
</feature>
<feature type="coiled-coil region" evidence="2">
    <location>
        <begin position="449"/>
        <end position="493"/>
    </location>
</feature>
<feature type="coiled-coil region" evidence="2">
    <location>
        <begin position="585"/>
        <end position="626"/>
    </location>
</feature>
<feature type="compositionally biased region" description="Basic and acidic residues" evidence="4">
    <location>
        <begin position="751"/>
        <end position="766"/>
    </location>
</feature>
<feature type="compositionally biased region" description="Pro residues" evidence="4">
    <location>
        <begin position="826"/>
        <end position="835"/>
    </location>
</feature>
<feature type="compositionally biased region" description="Polar residues" evidence="4">
    <location>
        <begin position="851"/>
        <end position="871"/>
    </location>
</feature>
<feature type="compositionally biased region" description="Pro residues" evidence="4">
    <location>
        <begin position="879"/>
        <end position="890"/>
    </location>
</feature>
<feature type="compositionally biased region" description="Pro residues" evidence="4">
    <location>
        <begin position="912"/>
        <end position="925"/>
    </location>
</feature>
<feature type="compositionally biased region" description="Low complexity" evidence="4">
    <location>
        <begin position="926"/>
        <end position="944"/>
    </location>
</feature>
<feature type="compositionally biased region" description="Gly residues" evidence="4">
    <location>
        <begin position="945"/>
        <end position="957"/>
    </location>
</feature>
<accession>P0CM45</accession>
<accession>Q55PE5</accession>
<accession>Q5KE13</accession>
<organism>
    <name type="scientific">Cryptococcus neoformans var. neoformans serotype D (strain B-3501A)</name>
    <name type="common">Filobasidiella neoformans</name>
    <dbReference type="NCBI Taxonomy" id="283643"/>
    <lineage>
        <taxon>Eukaryota</taxon>
        <taxon>Fungi</taxon>
        <taxon>Dikarya</taxon>
        <taxon>Basidiomycota</taxon>
        <taxon>Agaricomycotina</taxon>
        <taxon>Tremellomycetes</taxon>
        <taxon>Tremellales</taxon>
        <taxon>Cryptococcaceae</taxon>
        <taxon>Cryptococcus</taxon>
        <taxon>Cryptococcus neoformans species complex</taxon>
    </lineage>
</organism>
<reference key="1">
    <citation type="journal article" date="2005" name="Science">
        <title>The genome of the basidiomycetous yeast and human pathogen Cryptococcus neoformans.</title>
        <authorList>
            <person name="Loftus B.J."/>
            <person name="Fung E."/>
            <person name="Roncaglia P."/>
            <person name="Rowley D."/>
            <person name="Amedeo P."/>
            <person name="Bruno D."/>
            <person name="Vamathevan J."/>
            <person name="Miranda M."/>
            <person name="Anderson I.J."/>
            <person name="Fraser J.A."/>
            <person name="Allen J.E."/>
            <person name="Bosdet I.E."/>
            <person name="Brent M.R."/>
            <person name="Chiu R."/>
            <person name="Doering T.L."/>
            <person name="Donlin M.J."/>
            <person name="D'Souza C.A."/>
            <person name="Fox D.S."/>
            <person name="Grinberg V."/>
            <person name="Fu J."/>
            <person name="Fukushima M."/>
            <person name="Haas B.J."/>
            <person name="Huang J.C."/>
            <person name="Janbon G."/>
            <person name="Jones S.J.M."/>
            <person name="Koo H.L."/>
            <person name="Krzywinski M.I."/>
            <person name="Kwon-Chung K.J."/>
            <person name="Lengeler K.B."/>
            <person name="Maiti R."/>
            <person name="Marra M.A."/>
            <person name="Marra R.E."/>
            <person name="Mathewson C.A."/>
            <person name="Mitchell T.G."/>
            <person name="Pertea M."/>
            <person name="Riggs F.R."/>
            <person name="Salzberg S.L."/>
            <person name="Schein J.E."/>
            <person name="Shvartsbeyn A."/>
            <person name="Shin H."/>
            <person name="Shumway M."/>
            <person name="Specht C.A."/>
            <person name="Suh B.B."/>
            <person name="Tenney A."/>
            <person name="Utterback T.R."/>
            <person name="Wickes B.L."/>
            <person name="Wortman J.R."/>
            <person name="Wye N.H."/>
            <person name="Kronstad J.W."/>
            <person name="Lodge J.K."/>
            <person name="Heitman J."/>
            <person name="Davis R.W."/>
            <person name="Fraser C.M."/>
            <person name="Hyman R.W."/>
        </authorList>
    </citation>
    <scope>NUCLEOTIDE SEQUENCE [LARGE SCALE GENOMIC DNA]</scope>
    <source>
        <strain>B-3501A</strain>
    </source>
</reference>
<keyword id="KW-0175">Coiled coil</keyword>
<keyword id="KW-0963">Cytoplasm</keyword>
<keyword id="KW-0967">Endosome</keyword>
<keyword id="KW-0653">Protein transport</keyword>
<keyword id="KW-0813">Transport</keyword>
<sequence>MSVQSPLIAVPRKTTTDVDWATPIRHVIAASYGEDPNSYAEECAVLQRCRQDAVRGAGNDQTARDLLYKYFGQLELLELRFAEIKVSFPWNDAFTDKLTTQTSLAFEKASIIHLISSILSSLAQSASRSDPEGLKRAYYNPRATAGMLTYINENFLHAPSTDLSREVVHLLIGIMMAQAAEIFTEKLVEEKKSASLVARSANQTASMYTSVVDEMKEFQGKGVFDRNWLYVLQIKAKLFGSLTQYYKATSDSAAGKHGTALVRLKIANSLIQDAQKQASSFIYTFVAASTPSLPHDAANALNEIVKAHATVCGEAKEQAVKDNDLIYHEVLPSEASLPAIEKLPPAAPITIQDVYGNQEVTKLIGPDIFLRLVPLAVHESASVYSEEKAKLVRAEVDKVELAEGEIQAGLDHLNLPEEIDRWRQFLEGDTNDDVPLSQQLKSLVDSVGDVRQVENDLGRLDGERGACERELRELNGALDAESRECERMRAKYTPNFTQSPSGPQTANLRSNLSANLSALSSASTSDAHLQSLWQSIQPSISLLSSGPSNLERAARDITEGNSQKIDKTVSLLDLDDEEVDRKALGQEEKDALRKAVDDGREKLDRLKKIRAERDEVLRDLKEKIQTDDVSNLLLLNRRSQNVEPQLFASELEKFRPYQTRLAAAVSASRSILQELDMLVAQVHKGTGFREILRKEKDRQRIIRDWEKRLIEAGESYAEIRAGLGKGLSYYDSLRRVIEDLRMEVQRFTNSREQERRNMVSDIETRQRLGGTSPSTGGVVANRGLEERLAALKMEAPPQPPRLGTTSTPNLPPPPGRGSSNVTSSYLPPPPPPKPQSNPYDFSTLAGFGSFATPSVSSPQHVYPSQPQQAYNQQSYIPPQQNPYYPPPPSRPTYASPPFAPQQPPMQSGHSPYAPPPGHAPQPQQPQYPSSQNQQQRQGYEYPGYGQQGGYGGGYGQY</sequence>
<dbReference type="EMBL" id="AAEY01000038">
    <property type="protein sequence ID" value="EAL19639.1"/>
    <property type="molecule type" value="Genomic_DNA"/>
</dbReference>
<dbReference type="RefSeq" id="XP_774286.1">
    <property type="nucleotide sequence ID" value="XM_769193.1"/>
</dbReference>
<dbReference type="SMR" id="P0CM45"/>
<dbReference type="GeneID" id="4937302"/>
<dbReference type="KEGG" id="cnb:CNBG2670"/>
<dbReference type="VEuPathDB" id="FungiDB:CNBG2670"/>
<dbReference type="HOGENOM" id="CLU_003661_0_0_1"/>
<dbReference type="OrthoDB" id="8009at5206"/>
<dbReference type="GO" id="GO:0005768">
    <property type="term" value="C:endosome"/>
    <property type="evidence" value="ECO:0007669"/>
    <property type="project" value="UniProtKB-SubCell"/>
</dbReference>
<dbReference type="GO" id="GO:0043328">
    <property type="term" value="P:protein transport to vacuole involved in ubiquitin-dependent protein catabolic process via the multivesicular body sorting pathway"/>
    <property type="evidence" value="ECO:0007669"/>
    <property type="project" value="TreeGrafter"/>
</dbReference>
<dbReference type="CDD" id="cd09242">
    <property type="entry name" value="BRO1_ScBro1_like"/>
    <property type="match status" value="1"/>
</dbReference>
<dbReference type="CDD" id="cd09237">
    <property type="entry name" value="V_ScBro1_like"/>
    <property type="match status" value="1"/>
</dbReference>
<dbReference type="Gene3D" id="1.20.120.560">
    <property type="entry name" value="alix/aip1 in complex with the ypdl late domain"/>
    <property type="match status" value="1"/>
</dbReference>
<dbReference type="Gene3D" id="1.20.140.50">
    <property type="entry name" value="alix/aip1 like domains"/>
    <property type="match status" value="1"/>
</dbReference>
<dbReference type="Gene3D" id="1.25.40.280">
    <property type="entry name" value="alix/aip1 like domains"/>
    <property type="match status" value="1"/>
</dbReference>
<dbReference type="InterPro" id="IPR025304">
    <property type="entry name" value="ALIX_V_dom"/>
</dbReference>
<dbReference type="InterPro" id="IPR004328">
    <property type="entry name" value="BRO1_dom"/>
</dbReference>
<dbReference type="InterPro" id="IPR038499">
    <property type="entry name" value="BRO1_sf"/>
</dbReference>
<dbReference type="PANTHER" id="PTHR23030">
    <property type="entry name" value="PCD6 INTERACTING PROTEIN-RELATED"/>
    <property type="match status" value="1"/>
</dbReference>
<dbReference type="PANTHER" id="PTHR23030:SF30">
    <property type="entry name" value="TYROSINE-PROTEIN PHOSPHATASE NON-RECEPTOR TYPE 23"/>
    <property type="match status" value="1"/>
</dbReference>
<dbReference type="Pfam" id="PF13949">
    <property type="entry name" value="ALIX_LYPXL_bnd"/>
    <property type="match status" value="1"/>
</dbReference>
<dbReference type="Pfam" id="PF03097">
    <property type="entry name" value="BRO1"/>
    <property type="match status" value="1"/>
</dbReference>
<dbReference type="SMART" id="SM01041">
    <property type="entry name" value="BRO1"/>
    <property type="match status" value="1"/>
</dbReference>
<dbReference type="PROSITE" id="PS51180">
    <property type="entry name" value="BRO1"/>
    <property type="match status" value="1"/>
</dbReference>
<evidence type="ECO:0000250" key="1"/>
<evidence type="ECO:0000255" key="2"/>
<evidence type="ECO:0000255" key="3">
    <source>
        <dbReference type="PROSITE-ProRule" id="PRU00526"/>
    </source>
</evidence>
<evidence type="ECO:0000256" key="4">
    <source>
        <dbReference type="SAM" id="MobiDB-lite"/>
    </source>
</evidence>
<evidence type="ECO:0000305" key="5"/>
<protein>
    <recommendedName>
        <fullName>Vacuolar protein-sorting protein BRO1</fullName>
    </recommendedName>
    <alternativeName>
        <fullName>BRO domain-containing protein 1</fullName>
    </alternativeName>
</protein>